<name>LSM6_SCHPO</name>
<protein>
    <recommendedName>
        <fullName evidence="6">LSM complex subunit lsm6</fullName>
    </recommendedName>
</protein>
<proteinExistence type="evidence at protein level"/>
<reference key="1">
    <citation type="journal article" date="2002" name="Nature">
        <title>The genome sequence of Schizosaccharomyces pombe.</title>
        <authorList>
            <person name="Wood V."/>
            <person name="Gwilliam R."/>
            <person name="Rajandream M.A."/>
            <person name="Lyne M.H."/>
            <person name="Lyne R."/>
            <person name="Stewart A."/>
            <person name="Sgouros J.G."/>
            <person name="Peat N."/>
            <person name="Hayles J."/>
            <person name="Baker S.G."/>
            <person name="Basham D."/>
            <person name="Bowman S."/>
            <person name="Brooks K."/>
            <person name="Brown D."/>
            <person name="Brown S."/>
            <person name="Chillingworth T."/>
            <person name="Churcher C.M."/>
            <person name="Collins M."/>
            <person name="Connor R."/>
            <person name="Cronin A."/>
            <person name="Davis P."/>
            <person name="Feltwell T."/>
            <person name="Fraser A."/>
            <person name="Gentles S."/>
            <person name="Goble A."/>
            <person name="Hamlin N."/>
            <person name="Harris D.E."/>
            <person name="Hidalgo J."/>
            <person name="Hodgson G."/>
            <person name="Holroyd S."/>
            <person name="Hornsby T."/>
            <person name="Howarth S."/>
            <person name="Huckle E.J."/>
            <person name="Hunt S."/>
            <person name="Jagels K."/>
            <person name="James K.D."/>
            <person name="Jones L."/>
            <person name="Jones M."/>
            <person name="Leather S."/>
            <person name="McDonald S."/>
            <person name="McLean J."/>
            <person name="Mooney P."/>
            <person name="Moule S."/>
            <person name="Mungall K.L."/>
            <person name="Murphy L.D."/>
            <person name="Niblett D."/>
            <person name="Odell C."/>
            <person name="Oliver K."/>
            <person name="O'Neil S."/>
            <person name="Pearson D."/>
            <person name="Quail M.A."/>
            <person name="Rabbinowitsch E."/>
            <person name="Rutherford K.M."/>
            <person name="Rutter S."/>
            <person name="Saunders D."/>
            <person name="Seeger K."/>
            <person name="Sharp S."/>
            <person name="Skelton J."/>
            <person name="Simmonds M.N."/>
            <person name="Squares R."/>
            <person name="Squares S."/>
            <person name="Stevens K."/>
            <person name="Taylor K."/>
            <person name="Taylor R.G."/>
            <person name="Tivey A."/>
            <person name="Walsh S.V."/>
            <person name="Warren T."/>
            <person name="Whitehead S."/>
            <person name="Woodward J.R."/>
            <person name="Volckaert G."/>
            <person name="Aert R."/>
            <person name="Robben J."/>
            <person name="Grymonprez B."/>
            <person name="Weltjens I."/>
            <person name="Vanstreels E."/>
            <person name="Rieger M."/>
            <person name="Schaefer M."/>
            <person name="Mueller-Auer S."/>
            <person name="Gabel C."/>
            <person name="Fuchs M."/>
            <person name="Duesterhoeft A."/>
            <person name="Fritzc C."/>
            <person name="Holzer E."/>
            <person name="Moestl D."/>
            <person name="Hilbert H."/>
            <person name="Borzym K."/>
            <person name="Langer I."/>
            <person name="Beck A."/>
            <person name="Lehrach H."/>
            <person name="Reinhardt R."/>
            <person name="Pohl T.M."/>
            <person name="Eger P."/>
            <person name="Zimmermann W."/>
            <person name="Wedler H."/>
            <person name="Wambutt R."/>
            <person name="Purnelle B."/>
            <person name="Goffeau A."/>
            <person name="Cadieu E."/>
            <person name="Dreano S."/>
            <person name="Gloux S."/>
            <person name="Lelaure V."/>
            <person name="Mottier S."/>
            <person name="Galibert F."/>
            <person name="Aves S.J."/>
            <person name="Xiang Z."/>
            <person name="Hunt C."/>
            <person name="Moore K."/>
            <person name="Hurst S.M."/>
            <person name="Lucas M."/>
            <person name="Rochet M."/>
            <person name="Gaillardin C."/>
            <person name="Tallada V.A."/>
            <person name="Garzon A."/>
            <person name="Thode G."/>
            <person name="Daga R.R."/>
            <person name="Cruzado L."/>
            <person name="Jimenez J."/>
            <person name="Sanchez M."/>
            <person name="del Rey F."/>
            <person name="Benito J."/>
            <person name="Dominguez A."/>
            <person name="Revuelta J.L."/>
            <person name="Moreno S."/>
            <person name="Armstrong J."/>
            <person name="Forsburg S.L."/>
            <person name="Cerutti L."/>
            <person name="Lowe T."/>
            <person name="McCombie W.R."/>
            <person name="Paulsen I."/>
            <person name="Potashkin J."/>
            <person name="Shpakovski G.V."/>
            <person name="Ussery D."/>
            <person name="Barrell B.G."/>
            <person name="Nurse P."/>
        </authorList>
    </citation>
    <scope>NUCLEOTIDE SEQUENCE [LARGE SCALE GENOMIC DNA]</scope>
    <source>
        <strain>972 / ATCC 24843</strain>
    </source>
</reference>
<reference evidence="9" key="2">
    <citation type="journal article" date="2011" name="J. Mol. Biol.">
        <title>Structure of the LSm657 complex: an assembly intermediate of the LSm1-7 and LSm2-8 rings.</title>
        <authorList>
            <person name="Mund M."/>
            <person name="Neu A."/>
            <person name="Ullmann J."/>
            <person name="Neu U."/>
            <person name="Sprangers R."/>
        </authorList>
    </citation>
    <scope>X-RAY CRYSTALLOGRAPHY (2.50 ANGSTROMS)</scope>
    <scope>SUBUNIT</scope>
    <scope>IDENTIFICATION IN THE LSM1-LSM7 AND LSM2-LSM8 COMPLEXES</scope>
</reference>
<reference evidence="10" key="3">
    <citation type="journal article" date="2012" name="PLoS ONE">
        <title>Crystal structures of Lsm3, Lsm4 and Lsm5/6/7 from Schizosaccharomyces pombe.</title>
        <authorList>
            <person name="Wu D."/>
            <person name="Jiang S."/>
            <person name="Bowler M.W."/>
            <person name="Song H."/>
        </authorList>
    </citation>
    <scope>X-RAY CRYSTALLOGRAPHY (2.30 ANGSTROMS)</scope>
    <scope>FUNCTION</scope>
    <scope>SUBUNIT</scope>
    <scope>IDENTIFICATION IN THE LSM1-LSM7 AND LSM2-LSM8 COMPLEXES</scope>
</reference>
<reference evidence="11 12 13 14" key="4">
    <citation type="journal article" date="2020" name="RNA">
        <title>Molecular basis for the distinct cellular functions of the Lsm1-7 and Lsm2-8 complexes.</title>
        <authorList>
            <person name="Montemayor E.J."/>
            <person name="Virta J.M."/>
            <person name="Hayes S.M."/>
            <person name="Nomura Y."/>
            <person name="Brow D.A."/>
            <person name="Butcher S.E."/>
        </authorList>
    </citation>
    <scope>X-RAY CRYSTALLOGRAPHY (1.81 ANGSTROMS) IN COMPLEX WITH RNA</scope>
    <scope>FUNCTION</scope>
    <scope>SUBUNIT</scope>
    <scope>IDENTIFICATION IN THE LSM1-LSM7 AND LSM2-LSM8 COMPLEXES</scope>
</reference>
<keyword id="KW-0002">3D-structure</keyword>
<keyword id="KW-0963">Cytoplasm</keyword>
<keyword id="KW-0507">mRNA processing</keyword>
<keyword id="KW-0508">mRNA splicing</keyword>
<keyword id="KW-0539">Nucleus</keyword>
<keyword id="KW-1185">Reference proteome</keyword>
<keyword id="KW-0687">Ribonucleoprotein</keyword>
<keyword id="KW-0694">RNA-binding</keyword>
<keyword id="KW-0698">rRNA processing</keyword>
<keyword id="KW-0747">Spliceosome</keyword>
<keyword id="KW-0819">tRNA processing</keyword>
<organism>
    <name type="scientific">Schizosaccharomyces pombe (strain 972 / ATCC 24843)</name>
    <name type="common">Fission yeast</name>
    <dbReference type="NCBI Taxonomy" id="284812"/>
    <lineage>
        <taxon>Eukaryota</taxon>
        <taxon>Fungi</taxon>
        <taxon>Dikarya</taxon>
        <taxon>Ascomycota</taxon>
        <taxon>Taphrinomycotina</taxon>
        <taxon>Schizosaccharomycetes</taxon>
        <taxon>Schizosaccharomycetales</taxon>
        <taxon>Schizosaccharomycetaceae</taxon>
        <taxon>Schizosaccharomyces</taxon>
    </lineage>
</organism>
<gene>
    <name type="primary">lsm6</name>
    <name type="ORF">SPAC2F3.17c</name>
</gene>
<comment type="function">
    <text evidence="1 4 5">Component of LSm protein complexes, which are involved in RNA processing and may function in a chaperone-like manner (PubMed:22615807, PubMed:32518066). Component of the cytoplasmic LSM1-LSM7 complex which is involved in mRNA degradation by activating the decapping step (PubMed:32518066). The LSM1-LSM7 complex loads onto the 3'-end of single stranded RNA (PubMed:32518066). Component of the nuclear LSM2-LSM8 complex, which is involved in spliceosome assembly (PubMed:32518066). The LSM2-LSM8 complex plays a role in the biogenesis of the spliceosomal U4/U6-U5 tri-snRNP complex by accelerating prp24-mediated annealing of U4/U6 di-snRNA (By similarity). The LSM2-LSM8 complex binds U6 snRNA terminating with a cyclic 2',3' phosphate group; RNA with an unmodified 3' hydroxyl or non-cyclic 3' phosphate is bound less tightly (PubMed:32518066).</text>
</comment>
<comment type="subunit">
    <text evidence="3 4 5 7 8">Component of the heptameric LSM1-LSM7 complex that forms a seven-membered ring structure with a donut shape (Probable) (PubMed:32518066). The LSm subunits are arranged in the order lsm1, lsm2, lsm3, lsm6, lsm5, lsm7 and lsm4 (PubMed:22001694, PubMed:22615807, PubMed:32518066). Component of the heptameric LSM2-LSM8 complex that forms a seven-membered ring structure with a donut shape (Probable) (PubMed:32518066). The LSm subunits are arranged in the order lsm8, lsm2, lsm3, lsm6, lsm5, lsm7 and lsm4 (PubMed:22001694, PubMed:22615807, PubMed:32518066).</text>
</comment>
<comment type="subcellular location">
    <subcellularLocation>
        <location evidence="1">Cytoplasm</location>
    </subcellularLocation>
    <subcellularLocation>
        <location evidence="1">Nucleus</location>
        <location evidence="1">Nucleolus</location>
    </subcellularLocation>
    <text evidence="1">LSM1 and LSM8 act competitively with respect to the localization of LSM1-LSM7 to the cytoplasm and LSM2-LSM8 to the nucleus. LSm proteins shift to the cytoplasm under conditions of stress.</text>
</comment>
<comment type="similarity">
    <text evidence="6">Belongs to the snRNP Sm proteins family. SmF/LSm6 subfamily.</text>
</comment>
<feature type="chain" id="PRO_0000125577" description="LSM complex subunit lsm6">
    <location>
        <begin position="1"/>
        <end position="75"/>
    </location>
</feature>
<feature type="domain" description="Sm" evidence="2">
    <location>
        <begin position="4"/>
        <end position="75"/>
    </location>
</feature>
<feature type="helix" evidence="15">
    <location>
        <begin position="4"/>
        <end position="12"/>
    </location>
</feature>
<feature type="strand" evidence="15">
    <location>
        <begin position="15"/>
        <end position="21"/>
    </location>
</feature>
<feature type="strand" evidence="15">
    <location>
        <begin position="26"/>
        <end position="34"/>
    </location>
</feature>
<feature type="strand" evidence="15">
    <location>
        <begin position="40"/>
        <end position="49"/>
    </location>
</feature>
<feature type="strand" evidence="15">
    <location>
        <begin position="52"/>
        <end position="62"/>
    </location>
</feature>
<feature type="helix" evidence="15">
    <location>
        <begin position="64"/>
        <end position="66"/>
    </location>
</feature>
<feature type="strand" evidence="15">
    <location>
        <begin position="67"/>
        <end position="72"/>
    </location>
</feature>
<accession>Q9UUI1</accession>
<sequence length="75" mass="8336">MDSSPNEFLNKVIGKKVLIRLSSGVDYKGILSCLDGYMNLALERTEEYVNGKKTNVYGDAFIRGNNVLYVSALDD</sequence>
<dbReference type="EMBL" id="CU329670">
    <property type="protein sequence ID" value="CAB54975.1"/>
    <property type="molecule type" value="Genomic_DNA"/>
</dbReference>
<dbReference type="PIR" id="T38534">
    <property type="entry name" value="T38534"/>
</dbReference>
<dbReference type="RefSeq" id="NP_594380.1">
    <property type="nucleotide sequence ID" value="NM_001019801.2"/>
</dbReference>
<dbReference type="PDB" id="3SWN">
    <property type="method" value="X-ray"/>
    <property type="resolution" value="2.50 A"/>
    <property type="chains" value="B/E/Q/T=1-75"/>
</dbReference>
<dbReference type="PDB" id="4EMK">
    <property type="method" value="X-ray"/>
    <property type="resolution" value="2.30 A"/>
    <property type="chains" value="B=1-75"/>
</dbReference>
<dbReference type="PDB" id="6PPN">
    <property type="method" value="X-ray"/>
    <property type="resolution" value="1.91 A"/>
    <property type="chains" value="F/N=1-75"/>
</dbReference>
<dbReference type="PDB" id="6PPP">
    <property type="method" value="X-ray"/>
    <property type="resolution" value="2.33 A"/>
    <property type="chains" value="F/N=1-75"/>
</dbReference>
<dbReference type="PDB" id="6PPQ">
    <property type="method" value="X-ray"/>
    <property type="resolution" value="1.81 A"/>
    <property type="chains" value="F=1-75"/>
</dbReference>
<dbReference type="PDB" id="6PPV">
    <property type="method" value="X-ray"/>
    <property type="resolution" value="2.05 A"/>
    <property type="chains" value="F=1-75"/>
</dbReference>
<dbReference type="PDBsum" id="3SWN"/>
<dbReference type="PDBsum" id="4EMK"/>
<dbReference type="PDBsum" id="6PPN"/>
<dbReference type="PDBsum" id="6PPP"/>
<dbReference type="PDBsum" id="6PPQ"/>
<dbReference type="PDBsum" id="6PPV"/>
<dbReference type="SMR" id="Q9UUI1"/>
<dbReference type="BioGRID" id="278481">
    <property type="interactions" value="3"/>
</dbReference>
<dbReference type="FunCoup" id="Q9UUI1">
    <property type="interactions" value="568"/>
</dbReference>
<dbReference type="STRING" id="284812.Q9UUI1"/>
<dbReference type="iPTMnet" id="Q9UUI1"/>
<dbReference type="PaxDb" id="4896-SPAC2F3.17c.1"/>
<dbReference type="EnsemblFungi" id="SPAC2F3.17c.1">
    <property type="protein sequence ID" value="SPAC2F3.17c.1:pep"/>
    <property type="gene ID" value="SPAC2F3.17c"/>
</dbReference>
<dbReference type="GeneID" id="2541997"/>
<dbReference type="KEGG" id="spo:2541997"/>
<dbReference type="PomBase" id="SPAC2F3.17c">
    <property type="gene designation" value="lsm6"/>
</dbReference>
<dbReference type="VEuPathDB" id="FungiDB:SPAC2F3.17c"/>
<dbReference type="eggNOG" id="KOG1783">
    <property type="taxonomic scope" value="Eukaryota"/>
</dbReference>
<dbReference type="HOGENOM" id="CLU_076902_7_4_1"/>
<dbReference type="InParanoid" id="Q9UUI1"/>
<dbReference type="OMA" id="EQTVEYV"/>
<dbReference type="PhylomeDB" id="Q9UUI1"/>
<dbReference type="Reactome" id="R-SPO-430039">
    <property type="pathway name" value="mRNA decay by 5' to 3' exoribonuclease"/>
</dbReference>
<dbReference type="EvolutionaryTrace" id="Q9UUI1"/>
<dbReference type="PRO" id="PR:Q9UUI1"/>
<dbReference type="Proteomes" id="UP000002485">
    <property type="component" value="Chromosome I"/>
</dbReference>
<dbReference type="GO" id="GO:1990726">
    <property type="term" value="C:Lsm1-7-Pat1 complex"/>
    <property type="evidence" value="ECO:0000269"/>
    <property type="project" value="PomBase"/>
</dbReference>
<dbReference type="GO" id="GO:0120115">
    <property type="term" value="C:Lsm2-8 complex"/>
    <property type="evidence" value="ECO:0000269"/>
    <property type="project" value="PomBase"/>
</dbReference>
<dbReference type="GO" id="GO:0005730">
    <property type="term" value="C:nucleolus"/>
    <property type="evidence" value="ECO:0000318"/>
    <property type="project" value="GO_Central"/>
</dbReference>
<dbReference type="GO" id="GO:0005634">
    <property type="term" value="C:nucleus"/>
    <property type="evidence" value="ECO:0007005"/>
    <property type="project" value="PomBase"/>
</dbReference>
<dbReference type="GO" id="GO:0000932">
    <property type="term" value="C:P-body"/>
    <property type="evidence" value="ECO:0000318"/>
    <property type="project" value="GO_Central"/>
</dbReference>
<dbReference type="GO" id="GO:0005732">
    <property type="term" value="C:sno(s)RNA-containing ribonucleoprotein complex"/>
    <property type="evidence" value="ECO:0000318"/>
    <property type="project" value="GO_Central"/>
</dbReference>
<dbReference type="GO" id="GO:0005681">
    <property type="term" value="C:spliceosomal complex"/>
    <property type="evidence" value="ECO:0007669"/>
    <property type="project" value="UniProtKB-KW"/>
</dbReference>
<dbReference type="GO" id="GO:0005697">
    <property type="term" value="C:telomerase holoenzyme complex"/>
    <property type="evidence" value="ECO:0000269"/>
    <property type="project" value="PomBase"/>
</dbReference>
<dbReference type="GO" id="GO:0005686">
    <property type="term" value="C:U2 snRNP"/>
    <property type="evidence" value="ECO:0000269"/>
    <property type="project" value="PomBase"/>
</dbReference>
<dbReference type="GO" id="GO:0046540">
    <property type="term" value="C:U4/U6 x U5 tri-snRNP complex"/>
    <property type="evidence" value="ECO:0000318"/>
    <property type="project" value="GO_Central"/>
</dbReference>
<dbReference type="GO" id="GO:0005682">
    <property type="term" value="C:U5 snRNP"/>
    <property type="evidence" value="ECO:0000314"/>
    <property type="project" value="PomBase"/>
</dbReference>
<dbReference type="GO" id="GO:0005688">
    <property type="term" value="C:U6 snRNP"/>
    <property type="evidence" value="ECO:0000269"/>
    <property type="project" value="PomBase"/>
</dbReference>
<dbReference type="GO" id="GO:0008266">
    <property type="term" value="F:poly(U) RNA binding"/>
    <property type="evidence" value="ECO:0000314"/>
    <property type="project" value="PomBase"/>
</dbReference>
<dbReference type="GO" id="GO:0003723">
    <property type="term" value="F:RNA binding"/>
    <property type="evidence" value="ECO:0000318"/>
    <property type="project" value="GO_Central"/>
</dbReference>
<dbReference type="GO" id="GO:0030620">
    <property type="term" value="F:U2 snRNA binding"/>
    <property type="evidence" value="ECO:0000314"/>
    <property type="project" value="PomBase"/>
</dbReference>
<dbReference type="GO" id="GO:0030490">
    <property type="term" value="P:maturation of SSU-rRNA"/>
    <property type="evidence" value="ECO:0000318"/>
    <property type="project" value="GO_Central"/>
</dbReference>
<dbReference type="GO" id="GO:0000398">
    <property type="term" value="P:mRNA splicing, via spliceosome"/>
    <property type="evidence" value="ECO:0000318"/>
    <property type="project" value="GO_Central"/>
</dbReference>
<dbReference type="GO" id="GO:1905323">
    <property type="term" value="P:telomerase holoenzyme complex assembly"/>
    <property type="evidence" value="ECO:0000304"/>
    <property type="project" value="PomBase"/>
</dbReference>
<dbReference type="GO" id="GO:0008033">
    <property type="term" value="P:tRNA processing"/>
    <property type="evidence" value="ECO:0007669"/>
    <property type="project" value="UniProtKB-KW"/>
</dbReference>
<dbReference type="CDD" id="cd01726">
    <property type="entry name" value="LSm6"/>
    <property type="match status" value="1"/>
</dbReference>
<dbReference type="FunFam" id="2.30.30.100:FF:000044">
    <property type="entry name" value="Probable U6 snRNA-associated Sm-like protein LSm6"/>
    <property type="match status" value="1"/>
</dbReference>
<dbReference type="Gene3D" id="2.30.30.100">
    <property type="match status" value="1"/>
</dbReference>
<dbReference type="InterPro" id="IPR016487">
    <property type="entry name" value="Lsm6/sSmF"/>
</dbReference>
<dbReference type="InterPro" id="IPR010920">
    <property type="entry name" value="LSM_dom_sf"/>
</dbReference>
<dbReference type="InterPro" id="IPR047575">
    <property type="entry name" value="Sm"/>
</dbReference>
<dbReference type="InterPro" id="IPR001163">
    <property type="entry name" value="Sm_dom_euk/arc"/>
</dbReference>
<dbReference type="PANTHER" id="PTHR11021">
    <property type="entry name" value="SMALL NUCLEAR RIBONUCLEOPROTEIN F SNRNP-F"/>
    <property type="match status" value="1"/>
</dbReference>
<dbReference type="PANTHER" id="PTHR11021:SF1">
    <property type="entry name" value="U6 SNRNA-ASSOCIATED SM-LIKE PROTEIN LSM6"/>
    <property type="match status" value="1"/>
</dbReference>
<dbReference type="Pfam" id="PF01423">
    <property type="entry name" value="LSM"/>
    <property type="match status" value="1"/>
</dbReference>
<dbReference type="PIRSF" id="PIRSF006609">
    <property type="entry name" value="snRNP_SmF"/>
    <property type="match status" value="1"/>
</dbReference>
<dbReference type="SMART" id="SM00651">
    <property type="entry name" value="Sm"/>
    <property type="match status" value="1"/>
</dbReference>
<dbReference type="SUPFAM" id="SSF50182">
    <property type="entry name" value="Sm-like ribonucleoproteins"/>
    <property type="match status" value="1"/>
</dbReference>
<dbReference type="PROSITE" id="PS52002">
    <property type="entry name" value="SM"/>
    <property type="match status" value="1"/>
</dbReference>
<evidence type="ECO:0000250" key="1">
    <source>
        <dbReference type="UniProtKB" id="Q06406"/>
    </source>
</evidence>
<evidence type="ECO:0000255" key="2">
    <source>
        <dbReference type="PROSITE-ProRule" id="PRU01346"/>
    </source>
</evidence>
<evidence type="ECO:0000269" key="3">
    <source>
    </source>
</evidence>
<evidence type="ECO:0000269" key="4">
    <source>
    </source>
</evidence>
<evidence type="ECO:0000269" key="5">
    <source>
    </source>
</evidence>
<evidence type="ECO:0000305" key="6"/>
<evidence type="ECO:0000305" key="7">
    <source>
    </source>
</evidence>
<evidence type="ECO:0000305" key="8">
    <source>
    </source>
</evidence>
<evidence type="ECO:0007744" key="9">
    <source>
        <dbReference type="PDB" id="3SWN"/>
    </source>
</evidence>
<evidence type="ECO:0007744" key="10">
    <source>
        <dbReference type="PDB" id="4EMK"/>
    </source>
</evidence>
<evidence type="ECO:0007744" key="11">
    <source>
        <dbReference type="PDB" id="6PPN"/>
    </source>
</evidence>
<evidence type="ECO:0007744" key="12">
    <source>
        <dbReference type="PDB" id="6PPP"/>
    </source>
</evidence>
<evidence type="ECO:0007744" key="13">
    <source>
        <dbReference type="PDB" id="6PPQ"/>
    </source>
</evidence>
<evidence type="ECO:0007744" key="14">
    <source>
        <dbReference type="PDB" id="6PPV"/>
    </source>
</evidence>
<evidence type="ECO:0007829" key="15">
    <source>
        <dbReference type="PDB" id="6PPQ"/>
    </source>
</evidence>